<reference key="1">
    <citation type="journal article" date="2004" name="Science">
        <title>The Ashbya gossypii genome as a tool for mapping the ancient Saccharomyces cerevisiae genome.</title>
        <authorList>
            <person name="Dietrich F.S."/>
            <person name="Voegeli S."/>
            <person name="Brachat S."/>
            <person name="Lerch A."/>
            <person name="Gates K."/>
            <person name="Steiner S."/>
            <person name="Mohr C."/>
            <person name="Poehlmann R."/>
            <person name="Luedi P."/>
            <person name="Choi S."/>
            <person name="Wing R.A."/>
            <person name="Flavier A."/>
            <person name="Gaffney T.D."/>
            <person name="Philippsen P."/>
        </authorList>
    </citation>
    <scope>NUCLEOTIDE SEQUENCE [LARGE SCALE GENOMIC DNA]</scope>
    <source>
        <strain>ATCC 10895 / CBS 109.51 / FGSC 9923 / NRRL Y-1056</strain>
    </source>
</reference>
<reference key="2">
    <citation type="journal article" date="2013" name="G3 (Bethesda)">
        <title>Genomes of Ashbya fungi isolated from insects reveal four mating-type loci, numerous translocations, lack of transposons, and distinct gene duplications.</title>
        <authorList>
            <person name="Dietrich F.S."/>
            <person name="Voegeli S."/>
            <person name="Kuo S."/>
            <person name="Philippsen P."/>
        </authorList>
    </citation>
    <scope>GENOME REANNOTATION</scope>
    <source>
        <strain>ATCC 10895 / CBS 109.51 / FGSC 9923 / NRRL Y-1056</strain>
    </source>
</reference>
<feature type="chain" id="PRO_0000089091" description="Actin-related protein 4">
    <location>
        <begin position="1"/>
        <end position="479"/>
    </location>
</feature>
<feature type="region of interest" description="Disordered" evidence="2">
    <location>
        <begin position="320"/>
        <end position="370"/>
    </location>
</feature>
<feature type="compositionally biased region" description="Polar residues" evidence="2">
    <location>
        <begin position="345"/>
        <end position="355"/>
    </location>
</feature>
<feature type="compositionally biased region" description="Basic and acidic residues" evidence="2">
    <location>
        <begin position="356"/>
        <end position="370"/>
    </location>
</feature>
<proteinExistence type="inferred from homology"/>
<sequence>MSNSALQVYGGDEITAVVIDPGSFTTNIGYSGTDCPQAILPSCYGKYTEGEKDELFSEQSIGLPRKDYEIHNIVQNGEVVDWEKAEKQWDWAIRSELRFETNSGMPALLTEPIWNSEENRKKSLEVLLESMDFSACYLVPTATAVSFAMGRPTCLVVDIGHDVTSVCPVVDGMTLSKSSMRSYIAGSLLNELIRSQLAPRKVIPLFQVAQRRPVFMERKFDYEIHPSLQKFVNERQFFQEFKETMLQVAPTSISKFKSEIETTSKRSIEAPWGEELVYDSLQRLEFAEQLFTPDLSQFPEDWPISKDGVVETWHNDYVPLKRNKPGTNVKDKEGTLDATPVPDENSVTSADQPNDNGKRNLEETTPDQKNEVSGLADLIYSSIMSTDVDLRTTLSHNVVITGGTSSLPGLMDRISAELNRSLPALKFRMLTSGQLRERQYQGWLGGSILASLGTFHQLWVGKQEYAEVGADRLLKDRFR</sequence>
<dbReference type="EMBL" id="AE016819">
    <property type="protein sequence ID" value="AAS53476.1"/>
    <property type="molecule type" value="Genomic_DNA"/>
</dbReference>
<dbReference type="RefSeq" id="NP_985652.1">
    <property type="nucleotide sequence ID" value="NM_211006.1"/>
</dbReference>
<dbReference type="SMR" id="Q754G5"/>
<dbReference type="FunCoup" id="Q754G5">
    <property type="interactions" value="414"/>
</dbReference>
<dbReference type="STRING" id="284811.Q754G5"/>
<dbReference type="EnsemblFungi" id="AAS53476">
    <property type="protein sequence ID" value="AAS53476"/>
    <property type="gene ID" value="AGOS_AFR105C"/>
</dbReference>
<dbReference type="GeneID" id="4621895"/>
<dbReference type="KEGG" id="ago:AGOS_AFR105C"/>
<dbReference type="eggNOG" id="KOG0679">
    <property type="taxonomic scope" value="Eukaryota"/>
</dbReference>
<dbReference type="HOGENOM" id="CLU_027965_6_2_1"/>
<dbReference type="InParanoid" id="Q754G5"/>
<dbReference type="OMA" id="MWLSRQE"/>
<dbReference type="OrthoDB" id="5132116at2759"/>
<dbReference type="Proteomes" id="UP000000591">
    <property type="component" value="Chromosome VI"/>
</dbReference>
<dbReference type="GO" id="GO:0031011">
    <property type="term" value="C:Ino80 complex"/>
    <property type="evidence" value="ECO:0007669"/>
    <property type="project" value="EnsemblFungi"/>
</dbReference>
<dbReference type="GO" id="GO:0035267">
    <property type="term" value="C:NuA4 histone acetyltransferase complex"/>
    <property type="evidence" value="ECO:0000318"/>
    <property type="project" value="GO_Central"/>
</dbReference>
<dbReference type="GO" id="GO:0016514">
    <property type="term" value="C:SWI/SNF complex"/>
    <property type="evidence" value="ECO:0000318"/>
    <property type="project" value="GO_Central"/>
</dbReference>
<dbReference type="GO" id="GO:0000812">
    <property type="term" value="C:Swr1 complex"/>
    <property type="evidence" value="ECO:0007669"/>
    <property type="project" value="EnsemblFungi"/>
</dbReference>
<dbReference type="GO" id="GO:0005524">
    <property type="term" value="F:ATP binding"/>
    <property type="evidence" value="ECO:0007669"/>
    <property type="project" value="EnsemblFungi"/>
</dbReference>
<dbReference type="GO" id="GO:0003682">
    <property type="term" value="F:chromatin binding"/>
    <property type="evidence" value="ECO:0000318"/>
    <property type="project" value="GO_Central"/>
</dbReference>
<dbReference type="GO" id="GO:0042393">
    <property type="term" value="F:histone binding"/>
    <property type="evidence" value="ECO:0007669"/>
    <property type="project" value="EnsemblFungi"/>
</dbReference>
<dbReference type="GO" id="GO:0006338">
    <property type="term" value="P:chromatin remodeling"/>
    <property type="evidence" value="ECO:0000318"/>
    <property type="project" value="GO_Central"/>
</dbReference>
<dbReference type="GO" id="GO:0006281">
    <property type="term" value="P:DNA repair"/>
    <property type="evidence" value="ECO:0007669"/>
    <property type="project" value="UniProtKB-KW"/>
</dbReference>
<dbReference type="GO" id="GO:0051382">
    <property type="term" value="P:kinetochore assembly"/>
    <property type="evidence" value="ECO:0007669"/>
    <property type="project" value="EnsemblFungi"/>
</dbReference>
<dbReference type="GO" id="GO:0006357">
    <property type="term" value="P:regulation of transcription by RNA polymerase II"/>
    <property type="evidence" value="ECO:0000318"/>
    <property type="project" value="GO_Central"/>
</dbReference>
<dbReference type="CDD" id="cd13395">
    <property type="entry name" value="ASKHA_NBD_Arp4_ACTL6-like"/>
    <property type="match status" value="1"/>
</dbReference>
<dbReference type="FunFam" id="3.30.420.40:FF:000203">
    <property type="entry name" value="Actin-related protein 4"/>
    <property type="match status" value="1"/>
</dbReference>
<dbReference type="FunFam" id="3.30.420.40:FF:000289">
    <property type="entry name" value="Actin-related protein 4"/>
    <property type="match status" value="1"/>
</dbReference>
<dbReference type="Gene3D" id="3.30.420.40">
    <property type="match status" value="3"/>
</dbReference>
<dbReference type="Gene3D" id="3.90.640.10">
    <property type="entry name" value="Actin, Chain A, domain 4"/>
    <property type="match status" value="1"/>
</dbReference>
<dbReference type="InterPro" id="IPR004000">
    <property type="entry name" value="Actin"/>
</dbReference>
<dbReference type="InterPro" id="IPR020902">
    <property type="entry name" value="Actin/actin-like_CS"/>
</dbReference>
<dbReference type="InterPro" id="IPR043129">
    <property type="entry name" value="ATPase_NBD"/>
</dbReference>
<dbReference type="PANTHER" id="PTHR11937">
    <property type="entry name" value="ACTIN"/>
    <property type="match status" value="1"/>
</dbReference>
<dbReference type="Pfam" id="PF00022">
    <property type="entry name" value="Actin"/>
    <property type="match status" value="1"/>
</dbReference>
<dbReference type="SMART" id="SM00268">
    <property type="entry name" value="ACTIN"/>
    <property type="match status" value="1"/>
</dbReference>
<dbReference type="SUPFAM" id="SSF53067">
    <property type="entry name" value="Actin-like ATPase domain"/>
    <property type="match status" value="2"/>
</dbReference>
<dbReference type="PROSITE" id="PS01132">
    <property type="entry name" value="ACTINS_ACT_LIKE"/>
    <property type="match status" value="1"/>
</dbReference>
<evidence type="ECO:0000250" key="1"/>
<evidence type="ECO:0000256" key="2">
    <source>
        <dbReference type="SAM" id="MobiDB-lite"/>
    </source>
</evidence>
<evidence type="ECO:0000305" key="3"/>
<protein>
    <recommendedName>
        <fullName>Actin-related protein 4</fullName>
    </recommendedName>
    <alternativeName>
        <fullName>Actin-like protein ARP4</fullName>
        <shortName>Actin-like protein 4</shortName>
    </alternativeName>
</protein>
<comment type="function">
    <text evidence="1">Chromatin interaction component of the NuA4 histone acetyltransferase complex which is involved in transcriptional activation of selected genes principally by acetylation of nucleosomal histone H4 and H2A. The NuA4 complex is also involved in DNA repair. Is required for NuA4 complex integrity. Component of the SWR1 complex which mediates the ATP-dependent exchange of histone H2A for the H2A variant HZT1 leading to transcriptional regulation of selected genes by chromatin remodeling. Component of the INO80 complex which remodels chromatin by shifting nucleosomes and is involved in DNA repair (By similarity).</text>
</comment>
<comment type="subunit">
    <text evidence="1">Component of the NuA4 histone acetyltransferase complex, of the INO80 chromatin remodeling complex, and of the SWR1 chromatin remodeling complex.</text>
</comment>
<comment type="subcellular location">
    <subcellularLocation>
        <location evidence="1">Nucleus</location>
    </subcellularLocation>
</comment>
<comment type="similarity">
    <text evidence="3">Belongs to the actin family. ARP4 subfamily.</text>
</comment>
<accession>Q754G5</accession>
<gene>
    <name type="primary">ARP4</name>
    <name type="ordered locus">AFR105C</name>
</gene>
<organism>
    <name type="scientific">Eremothecium gossypii (strain ATCC 10895 / CBS 109.51 / FGSC 9923 / NRRL Y-1056)</name>
    <name type="common">Yeast</name>
    <name type="synonym">Ashbya gossypii</name>
    <dbReference type="NCBI Taxonomy" id="284811"/>
    <lineage>
        <taxon>Eukaryota</taxon>
        <taxon>Fungi</taxon>
        <taxon>Dikarya</taxon>
        <taxon>Ascomycota</taxon>
        <taxon>Saccharomycotina</taxon>
        <taxon>Saccharomycetes</taxon>
        <taxon>Saccharomycetales</taxon>
        <taxon>Saccharomycetaceae</taxon>
        <taxon>Eremothecium</taxon>
    </lineage>
</organism>
<keyword id="KW-0010">Activator</keyword>
<keyword id="KW-0156">Chromatin regulator</keyword>
<keyword id="KW-0227">DNA damage</keyword>
<keyword id="KW-0234">DNA repair</keyword>
<keyword id="KW-0539">Nucleus</keyword>
<keyword id="KW-1185">Reference proteome</keyword>
<keyword id="KW-0804">Transcription</keyword>
<keyword id="KW-0805">Transcription regulation</keyword>
<name>ARP4_EREGS</name>